<sequence length="58" mass="6584">MATIKVTQTKSSIGRLPKHKATLRGLGLRKINHTVELEDTPCVRGMINKVYYMVKVEE</sequence>
<keyword id="KW-0687">Ribonucleoprotein</keyword>
<keyword id="KW-0689">Ribosomal protein</keyword>
<organism>
    <name type="scientific">Vibrio cholerae serotype O1 (strain M66-2)</name>
    <dbReference type="NCBI Taxonomy" id="579112"/>
    <lineage>
        <taxon>Bacteria</taxon>
        <taxon>Pseudomonadati</taxon>
        <taxon>Pseudomonadota</taxon>
        <taxon>Gammaproteobacteria</taxon>
        <taxon>Vibrionales</taxon>
        <taxon>Vibrionaceae</taxon>
        <taxon>Vibrio</taxon>
    </lineage>
</organism>
<comment type="subunit">
    <text evidence="1">Part of the 50S ribosomal subunit.</text>
</comment>
<comment type="similarity">
    <text evidence="1">Belongs to the universal ribosomal protein uL30 family.</text>
</comment>
<protein>
    <recommendedName>
        <fullName evidence="1">Large ribosomal subunit protein uL30</fullName>
    </recommendedName>
    <alternativeName>
        <fullName evidence="2">50S ribosomal protein L30</fullName>
    </alternativeName>
</protein>
<evidence type="ECO:0000255" key="1">
    <source>
        <dbReference type="HAMAP-Rule" id="MF_01371"/>
    </source>
</evidence>
<evidence type="ECO:0000305" key="2"/>
<proteinExistence type="inferred from homology"/>
<dbReference type="EMBL" id="CP001233">
    <property type="protein sequence ID" value="ACP06795.1"/>
    <property type="molecule type" value="Genomic_DNA"/>
</dbReference>
<dbReference type="RefSeq" id="WP_000201159.1">
    <property type="nucleotide sequence ID" value="NC_012578.1"/>
</dbReference>
<dbReference type="SMR" id="C3LRP0"/>
<dbReference type="GeneID" id="96872481"/>
<dbReference type="KEGG" id="vcm:VCM66_2498"/>
<dbReference type="HOGENOM" id="CLU_131047_1_4_6"/>
<dbReference type="Proteomes" id="UP000001217">
    <property type="component" value="Chromosome I"/>
</dbReference>
<dbReference type="GO" id="GO:0022625">
    <property type="term" value="C:cytosolic large ribosomal subunit"/>
    <property type="evidence" value="ECO:0007669"/>
    <property type="project" value="TreeGrafter"/>
</dbReference>
<dbReference type="GO" id="GO:0003735">
    <property type="term" value="F:structural constituent of ribosome"/>
    <property type="evidence" value="ECO:0007669"/>
    <property type="project" value="InterPro"/>
</dbReference>
<dbReference type="GO" id="GO:0006412">
    <property type="term" value="P:translation"/>
    <property type="evidence" value="ECO:0007669"/>
    <property type="project" value="UniProtKB-UniRule"/>
</dbReference>
<dbReference type="CDD" id="cd01658">
    <property type="entry name" value="Ribosomal_L30"/>
    <property type="match status" value="1"/>
</dbReference>
<dbReference type="FunFam" id="3.30.1390.20:FF:000001">
    <property type="entry name" value="50S ribosomal protein L30"/>
    <property type="match status" value="1"/>
</dbReference>
<dbReference type="Gene3D" id="3.30.1390.20">
    <property type="entry name" value="Ribosomal protein L30, ferredoxin-like fold domain"/>
    <property type="match status" value="1"/>
</dbReference>
<dbReference type="HAMAP" id="MF_01371_B">
    <property type="entry name" value="Ribosomal_uL30_B"/>
    <property type="match status" value="1"/>
</dbReference>
<dbReference type="InterPro" id="IPR036919">
    <property type="entry name" value="Ribo_uL30_ferredoxin-like_sf"/>
</dbReference>
<dbReference type="InterPro" id="IPR005996">
    <property type="entry name" value="Ribosomal_uL30_bac-type"/>
</dbReference>
<dbReference type="InterPro" id="IPR018038">
    <property type="entry name" value="Ribosomal_uL30_CS"/>
</dbReference>
<dbReference type="InterPro" id="IPR016082">
    <property type="entry name" value="Ribosomal_uL30_ferredoxin-like"/>
</dbReference>
<dbReference type="NCBIfam" id="TIGR01308">
    <property type="entry name" value="rpmD_bact"/>
    <property type="match status" value="1"/>
</dbReference>
<dbReference type="PANTHER" id="PTHR15892:SF2">
    <property type="entry name" value="LARGE RIBOSOMAL SUBUNIT PROTEIN UL30M"/>
    <property type="match status" value="1"/>
</dbReference>
<dbReference type="PANTHER" id="PTHR15892">
    <property type="entry name" value="MITOCHONDRIAL RIBOSOMAL PROTEIN L30"/>
    <property type="match status" value="1"/>
</dbReference>
<dbReference type="Pfam" id="PF00327">
    <property type="entry name" value="Ribosomal_L30"/>
    <property type="match status" value="1"/>
</dbReference>
<dbReference type="PIRSF" id="PIRSF002211">
    <property type="entry name" value="Ribosomal_L30_bac-type"/>
    <property type="match status" value="1"/>
</dbReference>
<dbReference type="SUPFAM" id="SSF55129">
    <property type="entry name" value="Ribosomal protein L30p/L7e"/>
    <property type="match status" value="1"/>
</dbReference>
<dbReference type="PROSITE" id="PS00634">
    <property type="entry name" value="RIBOSOMAL_L30"/>
    <property type="match status" value="1"/>
</dbReference>
<reference key="1">
    <citation type="journal article" date="2008" name="PLoS ONE">
        <title>A recalibrated molecular clock and independent origins for the cholera pandemic clones.</title>
        <authorList>
            <person name="Feng L."/>
            <person name="Reeves P.R."/>
            <person name="Lan R."/>
            <person name="Ren Y."/>
            <person name="Gao C."/>
            <person name="Zhou Z."/>
            <person name="Ren Y."/>
            <person name="Cheng J."/>
            <person name="Wang W."/>
            <person name="Wang J."/>
            <person name="Qian W."/>
            <person name="Li D."/>
            <person name="Wang L."/>
        </authorList>
    </citation>
    <scope>NUCLEOTIDE SEQUENCE [LARGE SCALE GENOMIC DNA]</scope>
    <source>
        <strain>M66-2</strain>
    </source>
</reference>
<name>RL30_VIBCM</name>
<feature type="chain" id="PRO_1000184169" description="Large ribosomal subunit protein uL30">
    <location>
        <begin position="1"/>
        <end position="58"/>
    </location>
</feature>
<gene>
    <name evidence="1" type="primary">rpmD</name>
    <name type="ordered locus">VCM66_2498</name>
</gene>
<accession>C3LRP0</accession>